<dbReference type="EMBL" id="AY358206">
    <property type="protein sequence ID" value="AAQ88573.1"/>
    <property type="molecule type" value="mRNA"/>
</dbReference>
<dbReference type="EMBL" id="AY302134">
    <property type="protein sequence ID" value="AAP57626.1"/>
    <property type="molecule type" value="mRNA"/>
</dbReference>
<dbReference type="EMBL" id="AC008732">
    <property type="status" value="NOT_ANNOTATED_CDS"/>
    <property type="molecule type" value="Genomic_DNA"/>
</dbReference>
<dbReference type="EMBL" id="AC009030">
    <property type="status" value="NOT_ANNOTATED_CDS"/>
    <property type="molecule type" value="Genomic_DNA"/>
</dbReference>
<dbReference type="EMBL" id="AC130449">
    <property type="status" value="NOT_ANNOTATED_CDS"/>
    <property type="molecule type" value="Genomic_DNA"/>
</dbReference>
<dbReference type="EMBL" id="CH471145">
    <property type="protein sequence ID" value="EAW55740.1"/>
    <property type="molecule type" value="Genomic_DNA"/>
</dbReference>
<dbReference type="EMBL" id="BC016460">
    <property type="protein sequence ID" value="AAH16460.1"/>
    <property type="molecule type" value="mRNA"/>
</dbReference>
<dbReference type="CCDS" id="CCDS10631.1">
    <molecule id="Q6UXU4-2"/>
</dbReference>
<dbReference type="CCDS" id="CCDS45450.1">
    <molecule id="Q6UXU4-1"/>
</dbReference>
<dbReference type="CCDS" id="CCDS81960.1">
    <molecule id="Q6UXU4-3"/>
</dbReference>
<dbReference type="RefSeq" id="NP_001103233.1">
    <molecule id="Q6UXU4-1"/>
    <property type="nucleotide sequence ID" value="NM_001109763.2"/>
</dbReference>
<dbReference type="RefSeq" id="NP_001310830.1">
    <molecule id="Q6UXU4-3"/>
    <property type="nucleotide sequence ID" value="NM_001323901.2"/>
</dbReference>
<dbReference type="RefSeq" id="NP_653276.1">
    <molecule id="Q6UXU4-2"/>
    <property type="nucleotide sequence ID" value="NM_144675.3"/>
</dbReference>
<dbReference type="SMR" id="Q6UXU4"/>
<dbReference type="BioGRID" id="126983">
    <property type="interactions" value="2"/>
</dbReference>
<dbReference type="FunCoup" id="Q6UXU4">
    <property type="interactions" value="494"/>
</dbReference>
<dbReference type="IntAct" id="Q6UXU4">
    <property type="interactions" value="2"/>
</dbReference>
<dbReference type="STRING" id="9606.ENSP00000394954"/>
<dbReference type="TCDB" id="8.A.16.5.3">
    <property type="family name" value="the ca(+) channel auxiliary subunit Gama1-Gama8 (ccaGama) family"/>
</dbReference>
<dbReference type="iPTMnet" id="Q6UXU4"/>
<dbReference type="PhosphoSitePlus" id="Q6UXU4"/>
<dbReference type="BioMuta" id="GSG1L"/>
<dbReference type="DMDM" id="187471161"/>
<dbReference type="MassIVE" id="Q6UXU4"/>
<dbReference type="PaxDb" id="9606-ENSP00000394954"/>
<dbReference type="PeptideAtlas" id="Q6UXU4"/>
<dbReference type="ProteomicsDB" id="67660">
    <molecule id="Q6UXU4-1"/>
</dbReference>
<dbReference type="ProteomicsDB" id="67662">
    <molecule id="Q6UXU4-3"/>
</dbReference>
<dbReference type="Antibodypedia" id="3053">
    <property type="antibodies" value="91 antibodies from 18 providers"/>
</dbReference>
<dbReference type="DNASU" id="146395"/>
<dbReference type="Ensembl" id="ENST00000380897.7">
    <molecule id="Q6UXU4-2"/>
    <property type="protein sequence ID" value="ENSP00000370282.3"/>
    <property type="gene ID" value="ENSG00000169181.13"/>
</dbReference>
<dbReference type="Ensembl" id="ENST00000395724.7">
    <molecule id="Q6UXU4-3"/>
    <property type="protein sequence ID" value="ENSP00000379074.3"/>
    <property type="gene ID" value="ENSG00000169181.13"/>
</dbReference>
<dbReference type="Ensembl" id="ENST00000447459.7">
    <molecule id="Q6UXU4-1"/>
    <property type="protein sequence ID" value="ENSP00000394954.2"/>
    <property type="gene ID" value="ENSG00000169181.13"/>
</dbReference>
<dbReference type="Ensembl" id="ENST00000569166.1">
    <molecule id="Q6UXU4-4"/>
    <property type="protein sequence ID" value="ENSP00000454880.1"/>
    <property type="gene ID" value="ENSG00000169181.13"/>
</dbReference>
<dbReference type="GeneID" id="146395"/>
<dbReference type="KEGG" id="hsa:146395"/>
<dbReference type="MANE-Select" id="ENST00000447459.7">
    <property type="protein sequence ID" value="ENSP00000394954.2"/>
    <property type="RefSeq nucleotide sequence ID" value="NM_001109763.2"/>
    <property type="RefSeq protein sequence ID" value="NP_001103233.1"/>
</dbReference>
<dbReference type="UCSC" id="uc002doy.3">
    <molecule id="Q6UXU4-1"/>
    <property type="organism name" value="human"/>
</dbReference>
<dbReference type="AGR" id="HGNC:28283"/>
<dbReference type="CTD" id="146395"/>
<dbReference type="DisGeNET" id="146395"/>
<dbReference type="GeneCards" id="GSG1L"/>
<dbReference type="HGNC" id="HGNC:28283">
    <property type="gene designation" value="GSG1L"/>
</dbReference>
<dbReference type="HPA" id="ENSG00000169181">
    <property type="expression patterns" value="Group enriched (brain, heart muscle)"/>
</dbReference>
<dbReference type="neXtProt" id="NX_Q6UXU4"/>
<dbReference type="OpenTargets" id="ENSG00000169181"/>
<dbReference type="PharmGKB" id="PA145148734"/>
<dbReference type="VEuPathDB" id="HostDB:ENSG00000169181"/>
<dbReference type="eggNOG" id="ENOG502QRSH">
    <property type="taxonomic scope" value="Eukaryota"/>
</dbReference>
<dbReference type="GeneTree" id="ENSGT01050000244814"/>
<dbReference type="HOGENOM" id="CLU_063057_0_0_1"/>
<dbReference type="InParanoid" id="Q6UXU4"/>
<dbReference type="OMA" id="FRLACRH"/>
<dbReference type="OrthoDB" id="10001768at2759"/>
<dbReference type="PAN-GO" id="Q6UXU4">
    <property type="GO annotations" value="3 GO annotations based on evolutionary models"/>
</dbReference>
<dbReference type="PhylomeDB" id="Q6UXU4"/>
<dbReference type="TreeFam" id="TF331388"/>
<dbReference type="PathwayCommons" id="Q6UXU4"/>
<dbReference type="SignaLink" id="Q6UXU4"/>
<dbReference type="BioGRID-ORCS" id="146395">
    <property type="hits" value="7 hits in 1134 CRISPR screens"/>
</dbReference>
<dbReference type="ChiTaRS" id="GSG1L">
    <property type="organism name" value="human"/>
</dbReference>
<dbReference type="GenomeRNAi" id="146395"/>
<dbReference type="Pharos" id="Q6UXU4">
    <property type="development level" value="Tbio"/>
</dbReference>
<dbReference type="PRO" id="PR:Q6UXU4"/>
<dbReference type="Proteomes" id="UP000005640">
    <property type="component" value="Chromosome 16"/>
</dbReference>
<dbReference type="RNAct" id="Q6UXU4">
    <property type="molecule type" value="protein"/>
</dbReference>
<dbReference type="Bgee" id="ENSG00000169181">
    <property type="expression patterns" value="Expressed in sural nerve and 116 other cell types or tissues"/>
</dbReference>
<dbReference type="ExpressionAtlas" id="Q6UXU4">
    <property type="expression patterns" value="baseline and differential"/>
</dbReference>
<dbReference type="GO" id="GO:0098978">
    <property type="term" value="C:glutamatergic synapse"/>
    <property type="evidence" value="ECO:0007669"/>
    <property type="project" value="Ensembl"/>
</dbReference>
<dbReference type="GO" id="GO:0005886">
    <property type="term" value="C:plasma membrane"/>
    <property type="evidence" value="ECO:0000318"/>
    <property type="project" value="GO_Central"/>
</dbReference>
<dbReference type="GO" id="GO:0098839">
    <property type="term" value="C:postsynaptic density membrane"/>
    <property type="evidence" value="ECO:0000318"/>
    <property type="project" value="GO_Central"/>
</dbReference>
<dbReference type="GO" id="GO:0098685">
    <property type="term" value="C:Schaffer collateral - CA1 synapse"/>
    <property type="evidence" value="ECO:0007669"/>
    <property type="project" value="Ensembl"/>
</dbReference>
<dbReference type="GO" id="GO:0099149">
    <property type="term" value="P:regulation of postsynaptic neurotransmitter receptor internalization"/>
    <property type="evidence" value="ECO:0007669"/>
    <property type="project" value="Ensembl"/>
</dbReference>
<dbReference type="GO" id="GO:0048172">
    <property type="term" value="P:regulation of short-term neuronal synaptic plasticity"/>
    <property type="evidence" value="ECO:0007669"/>
    <property type="project" value="Ensembl"/>
</dbReference>
<dbReference type="GO" id="GO:0050808">
    <property type="term" value="P:synapse organization"/>
    <property type="evidence" value="ECO:0007669"/>
    <property type="project" value="Ensembl"/>
</dbReference>
<dbReference type="GO" id="GO:0019226">
    <property type="term" value="P:transmission of nerve impulse"/>
    <property type="evidence" value="ECO:0007669"/>
    <property type="project" value="Ensembl"/>
</dbReference>
<dbReference type="FunFam" id="1.20.140.150:FF:000005">
    <property type="entry name" value="Germ cell-specific gene 1-like"/>
    <property type="match status" value="1"/>
</dbReference>
<dbReference type="Gene3D" id="1.20.140.150">
    <property type="match status" value="1"/>
</dbReference>
<dbReference type="InterPro" id="IPR012478">
    <property type="entry name" value="GSG-1"/>
</dbReference>
<dbReference type="InterPro" id="IPR050579">
    <property type="entry name" value="PMP-22/EMP/MP20-like"/>
</dbReference>
<dbReference type="PANTHER" id="PTHR10671">
    <property type="entry name" value="EPITHELIAL MEMBRANE PROTEIN-RELATED"/>
    <property type="match status" value="1"/>
</dbReference>
<dbReference type="PANTHER" id="PTHR10671:SF35">
    <property type="entry name" value="GERM CELL-SPECIFIC GENE 1-LIKE PROTEIN"/>
    <property type="match status" value="1"/>
</dbReference>
<dbReference type="Pfam" id="PF07803">
    <property type="entry name" value="GSG-1"/>
    <property type="match status" value="1"/>
</dbReference>
<keyword id="KW-0025">Alternative splicing</keyword>
<keyword id="KW-1003">Cell membrane</keyword>
<keyword id="KW-0472">Membrane</keyword>
<keyword id="KW-1267">Proteomics identification</keyword>
<keyword id="KW-1185">Reference proteome</keyword>
<keyword id="KW-0770">Synapse</keyword>
<keyword id="KW-0812">Transmembrane</keyword>
<keyword id="KW-1133">Transmembrane helix</keyword>
<feature type="chain" id="PRO_0000329464" description="Germ cell-specific gene 1-like protein">
    <location>
        <begin position="1"/>
        <end position="331"/>
    </location>
</feature>
<feature type="topological domain" description="Cytoplasmic" evidence="2">
    <location>
        <begin position="1"/>
        <end position="8"/>
    </location>
</feature>
<feature type="transmembrane region" description="Helical" evidence="2">
    <location>
        <begin position="9"/>
        <end position="29"/>
    </location>
</feature>
<feature type="topological domain" description="Extracellular" evidence="2">
    <location>
        <begin position="30"/>
        <end position="132"/>
    </location>
</feature>
<feature type="transmembrane region" description="Helical" evidence="2">
    <location>
        <begin position="133"/>
        <end position="153"/>
    </location>
</feature>
<feature type="topological domain" description="Cytoplasmic" evidence="2">
    <location>
        <begin position="154"/>
        <end position="173"/>
    </location>
</feature>
<feature type="transmembrane region" description="Helical" evidence="2">
    <location>
        <begin position="174"/>
        <end position="194"/>
    </location>
</feature>
<feature type="topological domain" description="Extracellular" evidence="2">
    <location>
        <begin position="195"/>
        <end position="217"/>
    </location>
</feature>
<feature type="transmembrane region" description="Helical" evidence="2">
    <location>
        <begin position="218"/>
        <end position="238"/>
    </location>
</feature>
<feature type="topological domain" description="Cytoplasmic" evidence="2">
    <location>
        <begin position="239"/>
        <end position="331"/>
    </location>
</feature>
<feature type="splice variant" id="VSP_033516" description="In isoform 3 and isoform 4." evidence="4 5">
    <location>
        <begin position="1"/>
        <end position="155"/>
    </location>
</feature>
<feature type="splice variant" id="VSP_033004" description="In isoform 2." evidence="3">
    <location>
        <begin position="133"/>
        <end position="183"/>
    </location>
</feature>
<feature type="splice variant" id="VSP_033517" description="In isoform 3." evidence="5">
    <original>R</original>
    <variation>RWQIEAQRGRATCPRSHSW</variation>
    <location>
        <position position="277"/>
    </location>
</feature>
<organism>
    <name type="scientific">Homo sapiens</name>
    <name type="common">Human</name>
    <dbReference type="NCBI Taxonomy" id="9606"/>
    <lineage>
        <taxon>Eukaryota</taxon>
        <taxon>Metazoa</taxon>
        <taxon>Chordata</taxon>
        <taxon>Craniata</taxon>
        <taxon>Vertebrata</taxon>
        <taxon>Euteleostomi</taxon>
        <taxon>Mammalia</taxon>
        <taxon>Eutheria</taxon>
        <taxon>Euarchontoglires</taxon>
        <taxon>Primates</taxon>
        <taxon>Haplorrhini</taxon>
        <taxon>Catarrhini</taxon>
        <taxon>Hominidae</taxon>
        <taxon>Homo</taxon>
    </lineage>
</organism>
<sequence>MKTSRRGRALLAVALNLLALLFATTAFLTTHWCQGTQRVPKPGCGQGGRANCPNSGANATANGTAAPAAAAAAATASGNGPPGGALYSWETGDDRFLFRNFHTGIWYSCEEELSGLGEKCRSFIDLAPASEKGVLWLSVVSEVLYILLLVVGFSLMCLELFHSSNVIDGLKLNAFAAVFTVLSGLLGMVAHMMYTQVFQVTVSLGPEDWRPHSWDYGWSFCLAWGSFTCCMAASVTTLNSYTKTVIEFRHKRKVFEQGYREEPTFIDPEAIKYFRERMEKRDGSEEDFHLDCRHERYPARHQPHMADSWPRSSAQEAPELNRQCWVLGHWV</sequence>
<accession>Q6UXU4</accession>
<accession>Q7Z6F8</accession>
<accession>Q8TB81</accession>
<proteinExistence type="evidence at protein level"/>
<evidence type="ECO:0000250" key="1"/>
<evidence type="ECO:0000255" key="2"/>
<evidence type="ECO:0000303" key="3">
    <source>
    </source>
</evidence>
<evidence type="ECO:0000303" key="4">
    <source>
    </source>
</evidence>
<evidence type="ECO:0000303" key="5">
    <source ref="2"/>
</evidence>
<evidence type="ECO:0000305" key="6"/>
<protein>
    <recommendedName>
        <fullName>Germ cell-specific gene 1-like protein</fullName>
        <shortName>GSG1-like protein</shortName>
    </recommendedName>
</protein>
<gene>
    <name type="primary">GSG1L</name>
    <name type="ORF">UNQ5831/PRO19651</name>
</gene>
<comment type="function">
    <text evidence="1">As a component of the inner core of AMPAR complex, modifies AMPA receptor (AMPAR) gating.</text>
</comment>
<comment type="subunit">
    <text evidence="1">Component of the inner core of AMPAR complex. AMPAR complex consists of an inner core made of 4 pore-forming GluA/GRIA proteins (GRIA1, GRIA2, GRIA3 and GRIA4) and 4 major auxiliary subunits arranged in a twofold symmetry. One of the two pairs of distinct binding sites is occupied either by CNIH2, CNIH3 or CACNG2, CACNG3. The other harbors CACNG2, CACNG3, CACNG4, CACNG8 or GSG1L. This inner core of AMPAR complex is complemented by outer core constituents binding directly to the GluA/GRIA proteins at sites distinct from the interaction sites of the inner core constituents. Outer core constituents include at least PRRT1, PRRT2, CKAMP44/SHISA9, FRRS1L and NRN1. The proteins of the inner and outer core serve as a platform for other, more peripherally associated AMPAR constituents. Alone or in combination, these auxiliary subunits control the gating and pharmacology of the AMPAR complex and profoundly impact their biogenesis and protein processing (By similarity).</text>
</comment>
<comment type="interaction">
    <interactant intactId="EBI-10297401">
        <id>Q6UXU4</id>
    </interactant>
    <interactant intactId="EBI-1044504">
        <id>Q9BS40</id>
        <label>LXN</label>
    </interactant>
    <organismsDiffer>false</organismsDiffer>
    <experiments>3</experiments>
</comment>
<comment type="interaction">
    <interactant intactId="EBI-18632127">
        <id>Q6UXU4-2</id>
    </interactant>
    <interactant intactId="EBI-3932027">
        <id>P21145</id>
        <label>MAL</label>
    </interactant>
    <organismsDiffer>false</organismsDiffer>
    <experiments>3</experiments>
</comment>
<comment type="subcellular location">
    <subcellularLocation>
        <location evidence="1">Cell membrane</location>
        <topology evidence="1">Multi-pass membrane protein</topology>
    </subcellularLocation>
    <subcellularLocation>
        <location evidence="1">Synapse</location>
    </subcellularLocation>
</comment>
<comment type="alternative products">
    <event type="alternative splicing"/>
    <isoform>
        <id>Q6UXU4-1</id>
        <name>1</name>
        <sequence type="displayed"/>
    </isoform>
    <isoform>
        <id>Q6UXU4-3</id>
        <name>2</name>
        <sequence type="described" ref="VSP_033004"/>
    </isoform>
    <isoform>
        <id>Q6UXU4-4</id>
        <name>3</name>
        <sequence type="described" ref="VSP_033516 VSP_033517"/>
    </isoform>
    <isoform>
        <id>Q6UXU4-2</id>
        <name>4</name>
        <sequence type="described" ref="VSP_033516"/>
    </isoform>
</comment>
<comment type="similarity">
    <text evidence="6">Belongs to the GSG1 family.</text>
</comment>
<name>GSG1L_HUMAN</name>
<reference key="1">
    <citation type="journal article" date="2003" name="Genome Res.">
        <title>The secreted protein discovery initiative (SPDI), a large-scale effort to identify novel human secreted and transmembrane proteins: a bioinformatics assessment.</title>
        <authorList>
            <person name="Clark H.F."/>
            <person name="Gurney A.L."/>
            <person name="Abaya E."/>
            <person name="Baker K."/>
            <person name="Baldwin D.T."/>
            <person name="Brush J."/>
            <person name="Chen J."/>
            <person name="Chow B."/>
            <person name="Chui C."/>
            <person name="Crowley C."/>
            <person name="Currell B."/>
            <person name="Deuel B."/>
            <person name="Dowd P."/>
            <person name="Eaton D."/>
            <person name="Foster J.S."/>
            <person name="Grimaldi C."/>
            <person name="Gu Q."/>
            <person name="Hass P.E."/>
            <person name="Heldens S."/>
            <person name="Huang A."/>
            <person name="Kim H.S."/>
            <person name="Klimowski L."/>
            <person name="Jin Y."/>
            <person name="Johnson S."/>
            <person name="Lee J."/>
            <person name="Lewis L."/>
            <person name="Liao D."/>
            <person name="Mark M.R."/>
            <person name="Robbie E."/>
            <person name="Sanchez C."/>
            <person name="Schoenfeld J."/>
            <person name="Seshagiri S."/>
            <person name="Simmons L."/>
            <person name="Singh J."/>
            <person name="Smith V."/>
            <person name="Stinson J."/>
            <person name="Vagts A."/>
            <person name="Vandlen R.L."/>
            <person name="Watanabe C."/>
            <person name="Wieand D."/>
            <person name="Woods K."/>
            <person name="Xie M.-H."/>
            <person name="Yansura D.G."/>
            <person name="Yi S."/>
            <person name="Yu G."/>
            <person name="Yuan J."/>
            <person name="Zhang M."/>
            <person name="Zhang Z."/>
            <person name="Goddard A.D."/>
            <person name="Wood W.I."/>
            <person name="Godowski P.J."/>
            <person name="Gray A.M."/>
        </authorList>
    </citation>
    <scope>NUCLEOTIDE SEQUENCE [LARGE SCALE MRNA] (ISOFORM 2)</scope>
</reference>
<reference key="2">
    <citation type="submission" date="2003-05" db="EMBL/GenBank/DDBJ databases">
        <authorList>
            <person name="Li H."/>
            <person name="Li S."/>
            <person name="Zhou G."/>
            <person name="Shen C."/>
            <person name="Li M."/>
            <person name="Xiao W."/>
            <person name="Lin L."/>
            <person name="Yang S."/>
        </authorList>
    </citation>
    <scope>NUCLEOTIDE SEQUENCE [LARGE SCALE MRNA] (ISOFORM 3)</scope>
</reference>
<reference key="3">
    <citation type="journal article" date="1999" name="Genomics">
        <title>Genome duplications and other features in 12 Mb of DNA sequence from human chromosome 16p and 16q.</title>
        <authorList>
            <person name="Loftus B.J."/>
            <person name="Kim U.-J."/>
            <person name="Sneddon V.P."/>
            <person name="Kalush F."/>
            <person name="Brandon R."/>
            <person name="Fuhrmann J."/>
            <person name="Mason T."/>
            <person name="Crosby M.L."/>
            <person name="Barnstead M."/>
            <person name="Cronin L."/>
            <person name="Mays A.D."/>
            <person name="Cao Y."/>
            <person name="Xu R.X."/>
            <person name="Kang H.-L."/>
            <person name="Mitchell S."/>
            <person name="Eichler E.E."/>
            <person name="Harris P.C."/>
            <person name="Venter J.C."/>
            <person name="Adams M.D."/>
        </authorList>
    </citation>
    <scope>NUCLEOTIDE SEQUENCE [LARGE SCALE GENOMIC DNA]</scope>
</reference>
<reference key="4">
    <citation type="submission" date="2005-09" db="EMBL/GenBank/DDBJ databases">
        <authorList>
            <person name="Mural R.J."/>
            <person name="Istrail S."/>
            <person name="Sutton G.G."/>
            <person name="Florea L."/>
            <person name="Halpern A.L."/>
            <person name="Mobarry C.M."/>
            <person name="Lippert R."/>
            <person name="Walenz B."/>
            <person name="Shatkay H."/>
            <person name="Dew I."/>
            <person name="Miller J.R."/>
            <person name="Flanigan M.J."/>
            <person name="Edwards N.J."/>
            <person name="Bolanos R."/>
            <person name="Fasulo D."/>
            <person name="Halldorsson B.V."/>
            <person name="Hannenhalli S."/>
            <person name="Turner R."/>
            <person name="Yooseph S."/>
            <person name="Lu F."/>
            <person name="Nusskern D.R."/>
            <person name="Shue B.C."/>
            <person name="Zheng X.H."/>
            <person name="Zhong F."/>
            <person name="Delcher A.L."/>
            <person name="Huson D.H."/>
            <person name="Kravitz S.A."/>
            <person name="Mouchard L."/>
            <person name="Reinert K."/>
            <person name="Remington K.A."/>
            <person name="Clark A.G."/>
            <person name="Waterman M.S."/>
            <person name="Eichler E.E."/>
            <person name="Adams M.D."/>
            <person name="Hunkapiller M.W."/>
            <person name="Myers E.W."/>
            <person name="Venter J.C."/>
        </authorList>
    </citation>
    <scope>NUCLEOTIDE SEQUENCE [LARGE SCALE GENOMIC DNA]</scope>
</reference>
<reference key="5">
    <citation type="journal article" date="2004" name="Genome Res.">
        <title>The status, quality, and expansion of the NIH full-length cDNA project: the Mammalian Gene Collection (MGC).</title>
        <authorList>
            <consortium name="The MGC Project Team"/>
        </authorList>
    </citation>
    <scope>NUCLEOTIDE SEQUENCE [LARGE SCALE MRNA] (ISOFORM 4)</scope>
    <source>
        <tissue>Brain</tissue>
    </source>
</reference>